<protein>
    <recommendedName>
        <fullName evidence="1">Protein GrpE</fullName>
    </recommendedName>
    <alternativeName>
        <fullName evidence="1">HSP-70 cofactor</fullName>
    </alternativeName>
</protein>
<sequence length="185" mass="20839">MSQEKKEELQSEAQVTKEETPQANEAAAEAEAIVNEFDLLQEELNSLKDKYARVHADFENIKKRLEREKYSAVEYANEKFAKDMIPVMDALHMALSSSSSIIDSAEHLEKLKEGIELTLKQLSTALEKHGITMVSHDAPFDPNIHNAIQSVDSDTVESGQIVQTFQTGYKYKDRPLREAMVVVAN</sequence>
<keyword id="KW-0143">Chaperone</keyword>
<keyword id="KW-0963">Cytoplasm</keyword>
<keyword id="KW-1185">Reference proteome</keyword>
<keyword id="KW-0346">Stress response</keyword>
<accession>Q30Q11</accession>
<comment type="function">
    <text evidence="1">Participates actively in the response to hyperosmotic and heat shock by preventing the aggregation of stress-denatured proteins, in association with DnaK and GrpE. It is the nucleotide exchange factor for DnaK and may function as a thermosensor. Unfolded proteins bind initially to DnaJ; upon interaction with the DnaJ-bound protein, DnaK hydrolyzes its bound ATP, resulting in the formation of a stable complex. GrpE releases ADP from DnaK; ATP binding to DnaK triggers the release of the substrate protein, thus completing the reaction cycle. Several rounds of ATP-dependent interactions between DnaJ, DnaK and GrpE are required for fully efficient folding.</text>
</comment>
<comment type="subunit">
    <text evidence="1">Homodimer.</text>
</comment>
<comment type="subcellular location">
    <subcellularLocation>
        <location evidence="1">Cytoplasm</location>
    </subcellularLocation>
</comment>
<comment type="similarity">
    <text evidence="1">Belongs to the GrpE family.</text>
</comment>
<proteinExistence type="inferred from homology"/>
<reference key="1">
    <citation type="journal article" date="2008" name="Appl. Environ. Microbiol.">
        <title>Genome of the epsilonproteobacterial chemolithoautotroph Sulfurimonas denitrificans.</title>
        <authorList>
            <person name="Sievert S.M."/>
            <person name="Scott K.M."/>
            <person name="Klotz M.G."/>
            <person name="Chain P.S.G."/>
            <person name="Hauser L.J."/>
            <person name="Hemp J."/>
            <person name="Huegler M."/>
            <person name="Land M."/>
            <person name="Lapidus A."/>
            <person name="Larimer F.W."/>
            <person name="Lucas S."/>
            <person name="Malfatti S.A."/>
            <person name="Meyer F."/>
            <person name="Paulsen I.T."/>
            <person name="Ren Q."/>
            <person name="Simon J."/>
            <person name="Bailey K."/>
            <person name="Diaz E."/>
            <person name="Fitzpatrick K.A."/>
            <person name="Glover B."/>
            <person name="Gwatney N."/>
            <person name="Korajkic A."/>
            <person name="Long A."/>
            <person name="Mobberley J.M."/>
            <person name="Pantry S.N."/>
            <person name="Pazder G."/>
            <person name="Peterson S."/>
            <person name="Quintanilla J.D."/>
            <person name="Sprinkle R."/>
            <person name="Stephens J."/>
            <person name="Thomas P."/>
            <person name="Vaughn R."/>
            <person name="Weber M.J."/>
            <person name="Wooten L.L."/>
        </authorList>
    </citation>
    <scope>NUCLEOTIDE SEQUENCE [LARGE SCALE GENOMIC DNA]</scope>
    <source>
        <strain>ATCC 33889 / DSM 1251</strain>
    </source>
</reference>
<organism>
    <name type="scientific">Sulfurimonas denitrificans (strain ATCC 33889 / DSM 1251)</name>
    <name type="common">Thiomicrospira denitrificans (strain ATCC 33889 / DSM 1251)</name>
    <dbReference type="NCBI Taxonomy" id="326298"/>
    <lineage>
        <taxon>Bacteria</taxon>
        <taxon>Pseudomonadati</taxon>
        <taxon>Campylobacterota</taxon>
        <taxon>Epsilonproteobacteria</taxon>
        <taxon>Campylobacterales</taxon>
        <taxon>Sulfurimonadaceae</taxon>
        <taxon>Sulfurimonas</taxon>
    </lineage>
</organism>
<evidence type="ECO:0000255" key="1">
    <source>
        <dbReference type="HAMAP-Rule" id="MF_01151"/>
    </source>
</evidence>
<evidence type="ECO:0000256" key="2">
    <source>
        <dbReference type="SAM" id="MobiDB-lite"/>
    </source>
</evidence>
<gene>
    <name evidence="1" type="primary">grpE</name>
    <name type="ordered locus">Suden_1643</name>
</gene>
<feature type="chain" id="PRO_1000164223" description="Protein GrpE">
    <location>
        <begin position="1"/>
        <end position="185"/>
    </location>
</feature>
<feature type="region of interest" description="Disordered" evidence="2">
    <location>
        <begin position="1"/>
        <end position="28"/>
    </location>
</feature>
<feature type="compositionally biased region" description="Basic and acidic residues" evidence="2">
    <location>
        <begin position="1"/>
        <end position="20"/>
    </location>
</feature>
<dbReference type="EMBL" id="CP000153">
    <property type="protein sequence ID" value="ABB44920.1"/>
    <property type="molecule type" value="Genomic_DNA"/>
</dbReference>
<dbReference type="RefSeq" id="WP_011373261.1">
    <property type="nucleotide sequence ID" value="NC_007575.1"/>
</dbReference>
<dbReference type="SMR" id="Q30Q11"/>
<dbReference type="STRING" id="326298.Suden_1643"/>
<dbReference type="KEGG" id="tdn:Suden_1643"/>
<dbReference type="eggNOG" id="COG0576">
    <property type="taxonomic scope" value="Bacteria"/>
</dbReference>
<dbReference type="HOGENOM" id="CLU_057217_5_2_7"/>
<dbReference type="OrthoDB" id="9789811at2"/>
<dbReference type="Proteomes" id="UP000002714">
    <property type="component" value="Chromosome"/>
</dbReference>
<dbReference type="GO" id="GO:0005829">
    <property type="term" value="C:cytosol"/>
    <property type="evidence" value="ECO:0007669"/>
    <property type="project" value="TreeGrafter"/>
</dbReference>
<dbReference type="GO" id="GO:0000774">
    <property type="term" value="F:adenyl-nucleotide exchange factor activity"/>
    <property type="evidence" value="ECO:0007669"/>
    <property type="project" value="InterPro"/>
</dbReference>
<dbReference type="GO" id="GO:0042803">
    <property type="term" value="F:protein homodimerization activity"/>
    <property type="evidence" value="ECO:0007669"/>
    <property type="project" value="InterPro"/>
</dbReference>
<dbReference type="GO" id="GO:0051087">
    <property type="term" value="F:protein-folding chaperone binding"/>
    <property type="evidence" value="ECO:0007669"/>
    <property type="project" value="InterPro"/>
</dbReference>
<dbReference type="GO" id="GO:0051082">
    <property type="term" value="F:unfolded protein binding"/>
    <property type="evidence" value="ECO:0007669"/>
    <property type="project" value="TreeGrafter"/>
</dbReference>
<dbReference type="GO" id="GO:0006457">
    <property type="term" value="P:protein folding"/>
    <property type="evidence" value="ECO:0007669"/>
    <property type="project" value="InterPro"/>
</dbReference>
<dbReference type="CDD" id="cd00446">
    <property type="entry name" value="GrpE"/>
    <property type="match status" value="1"/>
</dbReference>
<dbReference type="FunFam" id="2.30.22.10:FF:000001">
    <property type="entry name" value="Protein GrpE"/>
    <property type="match status" value="1"/>
</dbReference>
<dbReference type="Gene3D" id="3.90.20.20">
    <property type="match status" value="1"/>
</dbReference>
<dbReference type="Gene3D" id="2.30.22.10">
    <property type="entry name" value="Head domain of nucleotide exchange factor GrpE"/>
    <property type="match status" value="1"/>
</dbReference>
<dbReference type="HAMAP" id="MF_01151">
    <property type="entry name" value="GrpE"/>
    <property type="match status" value="1"/>
</dbReference>
<dbReference type="InterPro" id="IPR000740">
    <property type="entry name" value="GrpE"/>
</dbReference>
<dbReference type="InterPro" id="IPR013805">
    <property type="entry name" value="GrpE_coiled_coil"/>
</dbReference>
<dbReference type="InterPro" id="IPR009012">
    <property type="entry name" value="GrpE_head"/>
</dbReference>
<dbReference type="NCBIfam" id="NF010738">
    <property type="entry name" value="PRK14140.1"/>
    <property type="match status" value="1"/>
</dbReference>
<dbReference type="NCBIfam" id="NF010747">
    <property type="entry name" value="PRK14149.1"/>
    <property type="match status" value="1"/>
</dbReference>
<dbReference type="PANTHER" id="PTHR21237">
    <property type="entry name" value="GRPE PROTEIN"/>
    <property type="match status" value="1"/>
</dbReference>
<dbReference type="PANTHER" id="PTHR21237:SF23">
    <property type="entry name" value="GRPE PROTEIN HOMOLOG, MITOCHONDRIAL"/>
    <property type="match status" value="1"/>
</dbReference>
<dbReference type="Pfam" id="PF01025">
    <property type="entry name" value="GrpE"/>
    <property type="match status" value="1"/>
</dbReference>
<dbReference type="PRINTS" id="PR00773">
    <property type="entry name" value="GRPEPROTEIN"/>
</dbReference>
<dbReference type="SUPFAM" id="SSF58014">
    <property type="entry name" value="Coiled-coil domain of nucleotide exchange factor GrpE"/>
    <property type="match status" value="1"/>
</dbReference>
<dbReference type="SUPFAM" id="SSF51064">
    <property type="entry name" value="Head domain of nucleotide exchange factor GrpE"/>
    <property type="match status" value="1"/>
</dbReference>
<dbReference type="PROSITE" id="PS01071">
    <property type="entry name" value="GRPE"/>
    <property type="match status" value="1"/>
</dbReference>
<name>GRPE_SULDN</name>